<sequence>MDMNFDLYMNGVVEQARNEIESAGYEQLTTAEDVDKVLKQDGTTLVMINSVCGCAGGIARPAASHALHYDVLPDRLVTVFAGQDKEATQRAREYFEGYAPSSPSFALVKDGKITEMIERHQIEGHDVMNVINQLQTLFNKYCEER</sequence>
<name>Y1610_STAA8</name>
<reference key="1">
    <citation type="book" date="2006" name="Gram positive pathogens, 2nd edition">
        <title>The Staphylococcus aureus NCTC 8325 genome.</title>
        <editorList>
            <person name="Fischetti V."/>
            <person name="Novick R."/>
            <person name="Ferretti J."/>
            <person name="Portnoy D."/>
            <person name="Rood J."/>
        </editorList>
        <authorList>
            <person name="Gillaspy A.F."/>
            <person name="Worrell V."/>
            <person name="Orvis J."/>
            <person name="Roe B.A."/>
            <person name="Dyer D.W."/>
            <person name="Iandolo J.J."/>
        </authorList>
    </citation>
    <scope>NUCLEOTIDE SEQUENCE [LARGE SCALE GENOMIC DNA]</scope>
    <source>
        <strain>NCTC 8325 / PS 47</strain>
    </source>
</reference>
<evidence type="ECO:0000305" key="1"/>
<feature type="chain" id="PRO_0000272010" description="Bacilliredoxin SAOUHSC_01610">
    <location>
        <begin position="1"/>
        <end position="145"/>
    </location>
</feature>
<dbReference type="EMBL" id="CP000253">
    <property type="protein sequence ID" value="ABD30689.1"/>
    <property type="molecule type" value="Genomic_DNA"/>
</dbReference>
<dbReference type="RefSeq" id="YP_500125.1">
    <property type="nucleotide sequence ID" value="NC_007795.1"/>
</dbReference>
<dbReference type="SMR" id="Q2FY55"/>
<dbReference type="STRING" id="93061.SAOUHSC_01610"/>
<dbReference type="PaxDb" id="1280-SAXN108_1538"/>
<dbReference type="GeneID" id="3920026"/>
<dbReference type="KEGG" id="sao:SAOUHSC_01610"/>
<dbReference type="PATRIC" id="fig|93061.5.peg.1465"/>
<dbReference type="eggNOG" id="ENOG502ZBVN">
    <property type="taxonomic scope" value="Bacteria"/>
</dbReference>
<dbReference type="HOGENOM" id="CLU_132521_0_0_9"/>
<dbReference type="OrthoDB" id="9793981at2"/>
<dbReference type="PRO" id="PR:Q2FY55"/>
<dbReference type="Proteomes" id="UP000008816">
    <property type="component" value="Chromosome"/>
</dbReference>
<dbReference type="GO" id="GO:0045454">
    <property type="term" value="P:cell redox homeostasis"/>
    <property type="evidence" value="ECO:0000250"/>
    <property type="project" value="UniProtKB"/>
</dbReference>
<dbReference type="Gene3D" id="3.40.30.10">
    <property type="entry name" value="Glutaredoxin"/>
    <property type="match status" value="1"/>
</dbReference>
<dbReference type="InterPro" id="IPR009474">
    <property type="entry name" value="BrxB/BrxA"/>
</dbReference>
<dbReference type="NCBIfam" id="TIGR04191">
    <property type="entry name" value="YphP_YqiW"/>
    <property type="match status" value="1"/>
</dbReference>
<dbReference type="PANTHER" id="PTHR40052:SF1">
    <property type="entry name" value="BACILLIREDOXIN BRXB"/>
    <property type="match status" value="1"/>
</dbReference>
<dbReference type="PANTHER" id="PTHR40052">
    <property type="entry name" value="UPF0403 PROTEIN YQIW-RELATED"/>
    <property type="match status" value="1"/>
</dbReference>
<dbReference type="Pfam" id="PF06491">
    <property type="entry name" value="Disulph_isomer"/>
    <property type="match status" value="1"/>
</dbReference>
<accession>Q2FY55</accession>
<gene>
    <name type="ordered locus">SAOUHSC_01610</name>
</gene>
<keyword id="KW-1185">Reference proteome</keyword>
<organism>
    <name type="scientific">Staphylococcus aureus (strain NCTC 8325 / PS 47)</name>
    <dbReference type="NCBI Taxonomy" id="93061"/>
    <lineage>
        <taxon>Bacteria</taxon>
        <taxon>Bacillati</taxon>
        <taxon>Bacillota</taxon>
        <taxon>Bacilli</taxon>
        <taxon>Bacillales</taxon>
        <taxon>Staphylococcaceae</taxon>
        <taxon>Staphylococcus</taxon>
    </lineage>
</organism>
<protein>
    <recommendedName>
        <fullName evidence="1">Bacilliredoxin SAOUHSC_01610</fullName>
    </recommendedName>
</protein>
<comment type="similarity">
    <text evidence="1">Belongs to the bacilliredoxin family.</text>
</comment>
<proteinExistence type="inferred from homology"/>